<feature type="chain" id="PRO_0000072822" description="Cyclic di-GMP-binding protein">
    <location>
        <begin position="1"/>
        <end position="755"/>
    </location>
</feature>
<feature type="transmembrane region" description="Helical" evidence="2">
    <location>
        <begin position="724"/>
        <end position="744"/>
    </location>
</feature>
<feature type="sequence conflict" description="In Ref. 1; AAL71843." evidence="3" ref="1">
    <original>NAVVLGNPVLAGN</original>
    <variation>TRWCWQPGIGRY</variation>
    <location>
        <begin position="306"/>
        <end position="318"/>
    </location>
</feature>
<comment type="function">
    <text evidence="1">Binds the cellulose synthase activator, bis-(3'-5') cyclic diguanylic acid (c-di-GMP).</text>
</comment>
<comment type="pathway">
    <text>Glycan metabolism; bacterial cellulose biosynthesis.</text>
</comment>
<comment type="subunit">
    <text evidence="1">Tightly associated with the cellulose synthase catalytic subunit.</text>
</comment>
<comment type="subcellular location">
    <subcellularLocation>
        <location evidence="1">Cell inner membrane</location>
        <topology evidence="1">Single-pass membrane protein</topology>
    </subcellularLocation>
</comment>
<comment type="similarity">
    <text evidence="3">Belongs to the AcsB/BcsB family.</text>
</comment>
<comment type="sequence caution" evidence="3">
    <conflict type="frameshift">
        <sequence resource="EMBL-CDS" id="AAL71843"/>
    </conflict>
</comment>
<reference key="1">
    <citation type="journal article" date="2002" name="Genetics">
        <title>Adaptive divergence in experimental populations of Pseudomonas fluorescens. I. Genetic and phenotypic bases of wrinkly spreader fitness.</title>
        <authorList>
            <person name="Spiers A.J."/>
            <person name="Kahn S.G."/>
            <person name="Bohannon J."/>
            <person name="Travisano M."/>
            <person name="Rainey P.B."/>
        </authorList>
    </citation>
    <scope>NUCLEOTIDE SEQUENCE [GENOMIC DNA]</scope>
</reference>
<reference key="2">
    <citation type="journal article" date="2009" name="Genome Biol.">
        <title>Genomic and genetic analyses of diversity and plant interactions of Pseudomonas fluorescens.</title>
        <authorList>
            <person name="Silby M.W."/>
            <person name="Cerdeno-Tarraga A.M."/>
            <person name="Vernikos G.S."/>
            <person name="Giddens S.R."/>
            <person name="Jackson R.W."/>
            <person name="Preston G.M."/>
            <person name="Zhang X.-X."/>
            <person name="Moon C.D."/>
            <person name="Gehrig S.M."/>
            <person name="Godfrey S.A.C."/>
            <person name="Knight C.G."/>
            <person name="Malone J.G."/>
            <person name="Robinson Z."/>
            <person name="Spiers A.J."/>
            <person name="Harris S."/>
            <person name="Challis G.L."/>
            <person name="Yaxley A.M."/>
            <person name="Harris D."/>
            <person name="Seeger K."/>
            <person name="Murphy L."/>
            <person name="Rutter S."/>
            <person name="Squares R."/>
            <person name="Quail M.A."/>
            <person name="Saunders E."/>
            <person name="Mavromatis K."/>
            <person name="Brettin T.S."/>
            <person name="Bentley S.D."/>
            <person name="Hothersall J."/>
            <person name="Stephens E."/>
            <person name="Thomas C.M."/>
            <person name="Parkhill J."/>
            <person name="Levy S.B."/>
            <person name="Rainey P.B."/>
            <person name="Thomson N.R."/>
        </authorList>
    </citation>
    <scope>NUCLEOTIDE SEQUENCE [LARGE SCALE GENOMIC DNA]</scope>
    <source>
        <strain>SBW25</strain>
    </source>
</reference>
<organism>
    <name type="scientific">Pseudomonas fluorescens (strain SBW25)</name>
    <dbReference type="NCBI Taxonomy" id="216595"/>
    <lineage>
        <taxon>Bacteria</taxon>
        <taxon>Pseudomonadati</taxon>
        <taxon>Pseudomonadota</taxon>
        <taxon>Gammaproteobacteria</taxon>
        <taxon>Pseudomonadales</taxon>
        <taxon>Pseudomonadaceae</taxon>
        <taxon>Pseudomonas</taxon>
    </lineage>
</organism>
<name>BCSB_PSEFS</name>
<dbReference type="EMBL" id="AY074776">
    <property type="protein sequence ID" value="AAL71843.1"/>
    <property type="status" value="ALT_FRAME"/>
    <property type="molecule type" value="Genomic_DNA"/>
</dbReference>
<dbReference type="EMBL" id="AM181176">
    <property type="protein sequence ID" value="CAY46579.1"/>
    <property type="molecule type" value="Genomic_DNA"/>
</dbReference>
<dbReference type="RefSeq" id="WP_012721723.1">
    <property type="nucleotide sequence ID" value="NC_012660.1"/>
</dbReference>
<dbReference type="SMR" id="P58934"/>
<dbReference type="GeneID" id="93461902"/>
<dbReference type="eggNOG" id="COG1215">
    <property type="taxonomic scope" value="Bacteria"/>
</dbReference>
<dbReference type="HOGENOM" id="CLU_003556_1_1_6"/>
<dbReference type="OrthoDB" id="9806702at2"/>
<dbReference type="UniPathway" id="UPA00694"/>
<dbReference type="GO" id="GO:0005886">
    <property type="term" value="C:plasma membrane"/>
    <property type="evidence" value="ECO:0007669"/>
    <property type="project" value="UniProtKB-SubCell"/>
</dbReference>
<dbReference type="GO" id="GO:0030244">
    <property type="term" value="P:cellulose biosynthetic process"/>
    <property type="evidence" value="ECO:0007669"/>
    <property type="project" value="UniProtKB-KW"/>
</dbReference>
<dbReference type="GO" id="GO:0006011">
    <property type="term" value="P:UDP-alpha-D-glucose metabolic process"/>
    <property type="evidence" value="ECO:0007669"/>
    <property type="project" value="InterPro"/>
</dbReference>
<dbReference type="Gene3D" id="2.60.120.260">
    <property type="entry name" value="Galactose-binding domain-like"/>
    <property type="match status" value="2"/>
</dbReference>
<dbReference type="InterPro" id="IPR003920">
    <property type="entry name" value="Cell_synth_B"/>
</dbReference>
<dbReference type="InterPro" id="IPR018513">
    <property type="entry name" value="Cell_synthase_bac"/>
</dbReference>
<dbReference type="NCBIfam" id="NF008323">
    <property type="entry name" value="PRK11114.1-1"/>
    <property type="match status" value="1"/>
</dbReference>
<dbReference type="NCBIfam" id="NF008330">
    <property type="entry name" value="PRK11114.2-4"/>
    <property type="match status" value="1"/>
</dbReference>
<dbReference type="PANTHER" id="PTHR39083">
    <property type="entry name" value="CYCLIC DI-GMP-BINDING PROTEIN"/>
    <property type="match status" value="1"/>
</dbReference>
<dbReference type="PANTHER" id="PTHR39083:SF1">
    <property type="entry name" value="CYCLIC DI-GMP-BINDING PROTEIN"/>
    <property type="match status" value="1"/>
</dbReference>
<dbReference type="Pfam" id="PF03170">
    <property type="entry name" value="BcsB"/>
    <property type="match status" value="1"/>
</dbReference>
<dbReference type="PRINTS" id="PR01440">
    <property type="entry name" value="CELLSNTHASEB"/>
</dbReference>
<sequence>MTSNIFARPHPRRALALMIASLMGFNTLAQAAEQAVATVPVQSTDTGYSLTLKQLGRRDTMNLQGVESSDSVNFDIRADEVVKGAQLLLKYSYSPALLADLSQINVLVNGEVAASLPLPKEGAGTPQEQLVQIPAHLITEFNRLSLQFIGHYTMSCEDPLHSSLWAKISNSSELKVQVEPIVLKDDLAVLPLPFFDKRDARQVSLPFVFATAPDSAALEAAGALSSWIGGLASYRGATFPTTLGELPAKGNAIVLVQTADAMDIHGVAVAKPAGPTLTLIANPNDANGKLLIVTGRDGAELKRAANAVVLGNPVLAGNSVVITKLDTLAPRRPYDAPNWLPSNRPVRLGELIEQQKLSVSGYNPGAISVDMRLPPDLFNWREEGVPLKLKYRYTPQQVSTNSSLLIGLNDQFMKSVALPSVSNLGGGQTLLDQLKKDESLPREVTTLLPISSASPKSKLQVRFMYDYIKEGECRDIIVDNMRGSVDPDSTLDVTGYQHYIAMPNLGVFNDSGFPFTRLADLSESAVVMPDNYGTDELTAYLTVLGRFGEATGYPATAVKVVQAKDVQSVADKDLLVLATAANQPLLKQWQQYLPATSDGEQHQFLLSDLPRYVRSWISPDPAANQHPANTGITFKGLSNSTWLAGFQSPLKSGRSVVLIASNQPQGLLEATNALIGGDDYKDSIQGSLAVVQGTQISSLVGDEQYYVGKLNYFKFMQWQLSQNLGWMLLITFLGLAVVTSLIYLSLRARAKRRLA</sequence>
<accession>P58934</accession>
<accession>C3K5V5</accession>
<accession>Q8RSZ0</accession>
<gene>
    <name type="primary">bcsB</name>
    <name type="synonym">wssC</name>
    <name type="ordered locus">PFLU_0302</name>
</gene>
<keyword id="KW-0973">c-di-GMP</keyword>
<keyword id="KW-0997">Cell inner membrane</keyword>
<keyword id="KW-1003">Cell membrane</keyword>
<keyword id="KW-0135">Cellulose biosynthesis</keyword>
<keyword id="KW-0472">Membrane</keyword>
<keyword id="KW-0812">Transmembrane</keyword>
<keyword id="KW-1133">Transmembrane helix</keyword>
<protein>
    <recommendedName>
        <fullName>Cyclic di-GMP-binding protein</fullName>
    </recommendedName>
    <alternativeName>
        <fullName>Cellulose synthase regulatory subunit</fullName>
    </alternativeName>
</protein>
<evidence type="ECO:0000250" key="1"/>
<evidence type="ECO:0000255" key="2"/>
<evidence type="ECO:0000305" key="3"/>
<proteinExistence type="inferred from homology"/>